<proteinExistence type="evidence at protein level"/>
<sequence>MAFLKKSLFLVLFLGLVSLSICEEEKRENEDEEEQEDDEQSEMKRGMWSTIRNVGKSAAKAANLPAKAALGAISEAVGEQ</sequence>
<protein>
    <recommendedName>
        <fullName evidence="7">Dermaseptin-A5</fullName>
        <shortName evidence="7">DRS-A5</shortName>
    </recommendedName>
    <alternativeName>
        <fullName evidence="5">Dermaseptin AA-3-6</fullName>
    </alternativeName>
    <alternativeName>
        <fullName evidence="4">Dermaseptin-A4</fullName>
        <shortName evidence="4">DRS-A4</shortName>
    </alternativeName>
</protein>
<evidence type="ECO:0000250" key="1"/>
<evidence type="ECO:0000255" key="2"/>
<evidence type="ECO:0000256" key="3">
    <source>
        <dbReference type="SAM" id="MobiDB-lite"/>
    </source>
</evidence>
<evidence type="ECO:0000303" key="4">
    <source>
    </source>
</evidence>
<evidence type="ECO:0000303" key="5">
    <source>
    </source>
</evidence>
<evidence type="ECO:0000305" key="6"/>
<evidence type="ECO:0000305" key="7">
    <source>
    </source>
</evidence>
<evidence type="ECO:0000305" key="8">
    <source>
    </source>
</evidence>
<feature type="signal peptide" evidence="2">
    <location>
        <begin position="1"/>
        <end position="22"/>
    </location>
</feature>
<feature type="propeptide" id="PRO_0000007073" evidence="6">
    <location>
        <begin position="23"/>
        <end position="43"/>
    </location>
</feature>
<feature type="peptide" id="PRO_0000007074" description="Dermaseptin-A5" evidence="8">
    <location>
        <begin position="46"/>
        <end position="77"/>
    </location>
</feature>
<feature type="propeptide" id="PRO_0000007075" evidence="6">
    <location>
        <begin position="79"/>
        <end position="80"/>
    </location>
</feature>
<feature type="region of interest" description="Disordered" evidence="3">
    <location>
        <begin position="24"/>
        <end position="45"/>
    </location>
</feature>
<feature type="compositionally biased region" description="Acidic residues" evidence="3">
    <location>
        <begin position="30"/>
        <end position="40"/>
    </location>
</feature>
<feature type="modified residue" description="Valine amide" evidence="8">
    <location>
        <position position="77"/>
    </location>
</feature>
<keyword id="KW-0027">Amidation</keyword>
<keyword id="KW-0878">Amphibian defense peptide</keyword>
<keyword id="KW-0044">Antibiotic</keyword>
<keyword id="KW-0929">Antimicrobial</keyword>
<keyword id="KW-0165">Cleavage on pair of basic residues</keyword>
<keyword id="KW-0964">Secreted</keyword>
<keyword id="KW-0732">Signal</keyword>
<accession>O93226</accession>
<dbReference type="EMBL" id="AJ005188">
    <property type="protein sequence ID" value="CAA06425.1"/>
    <property type="molecule type" value="mRNA"/>
</dbReference>
<dbReference type="SMR" id="O93226"/>
<dbReference type="GO" id="GO:0005576">
    <property type="term" value="C:extracellular region"/>
    <property type="evidence" value="ECO:0007669"/>
    <property type="project" value="UniProtKB-SubCell"/>
</dbReference>
<dbReference type="GO" id="GO:0042742">
    <property type="term" value="P:defense response to bacterium"/>
    <property type="evidence" value="ECO:0007669"/>
    <property type="project" value="UniProtKB-KW"/>
</dbReference>
<dbReference type="InterPro" id="IPR004275">
    <property type="entry name" value="Frog_antimicrobial_propeptide"/>
</dbReference>
<dbReference type="Pfam" id="PF03032">
    <property type="entry name" value="FSAP_sig_propep"/>
    <property type="match status" value="1"/>
</dbReference>
<comment type="function">
    <text evidence="1">Possesses a potent antimicrobial activity against Gram-positive and Gram-negative bacteria. Probably acts by disturbing membrane functions with its amphipathic structure (By similarity).</text>
</comment>
<comment type="subcellular location">
    <subcellularLocation>
        <location evidence="8">Secreted</location>
    </subcellularLocation>
</comment>
<comment type="tissue specificity">
    <text evidence="8">Expressed by the skin glands.</text>
</comment>
<comment type="similarity">
    <text evidence="6">Belongs to the frog skin active peptide (FSAP) family. Dermaseptin subfamily.</text>
</comment>
<comment type="online information" name="The antimicrobial peptide database">
    <link uri="https://wangapd3.com/database/query_output.php?ID=0967"/>
</comment>
<reference key="1">
    <citation type="journal article" date="1998" name="Biochim. Biophys. Acta">
        <title>Cloning of cDNAs encoding new peptides of the dermaseptin-family.</title>
        <authorList>
            <person name="Wechselberger C."/>
        </authorList>
    </citation>
    <scope>NUCLEOTIDE SEQUENCE [MRNA]</scope>
    <scope>AMIDATION AT VAL-77</scope>
    <source>
        <tissue>Skin</tissue>
    </source>
</reference>
<reference key="2">
    <citation type="journal article" date="2008" name="Peptides">
        <title>A consistent nomenclature of antimicrobial peptides isolated from frogs of the subfamily Phyllomedusinae.</title>
        <authorList>
            <person name="Amiche M."/>
            <person name="Ladram A."/>
            <person name="Nicolas P."/>
        </authorList>
    </citation>
    <scope>NOMENCLATURE</scope>
</reference>
<organism>
    <name type="scientific">Agalychnis annae</name>
    <name type="common">Blue-sided leaf frog</name>
    <name type="synonym">Phyllomedusa annae</name>
    <dbReference type="NCBI Taxonomy" id="75990"/>
    <lineage>
        <taxon>Eukaryota</taxon>
        <taxon>Metazoa</taxon>
        <taxon>Chordata</taxon>
        <taxon>Craniata</taxon>
        <taxon>Vertebrata</taxon>
        <taxon>Euteleostomi</taxon>
        <taxon>Amphibia</taxon>
        <taxon>Batrachia</taxon>
        <taxon>Anura</taxon>
        <taxon>Neobatrachia</taxon>
        <taxon>Hyloidea</taxon>
        <taxon>Hylidae</taxon>
        <taxon>Phyllomedusinae</taxon>
        <taxon>Agalychnis</taxon>
    </lineage>
</organism>
<name>DRS5_AGAAN</name>